<reference key="1">
    <citation type="journal article" date="1996" name="J. Bacteriol.">
        <title>Organization of Ureaplasma urealyticum urease gene cluster and expression in a suppressor strain of Escherichia coli.</title>
        <authorList>
            <person name="Neyrolles O."/>
            <person name="Ferris S."/>
            <person name="Behbahani N."/>
            <person name="Montagnier L."/>
            <person name="Blanchard A."/>
        </authorList>
    </citation>
    <scope>NUCLEOTIDE SEQUENCE [GENOMIC DNA]</scope>
    <source>
        <strain>ATCC 27813 / 7 / Serovar 1</strain>
    </source>
</reference>
<reference key="2">
    <citation type="journal article" date="2000" name="Nature">
        <title>The complete sequence of the mucosal pathogen Ureaplasma urealyticum.</title>
        <authorList>
            <person name="Glass J.I."/>
            <person name="Lefkowitz E.J."/>
            <person name="Glass J.S."/>
            <person name="Heiner C.R."/>
            <person name="Chen E.Y."/>
            <person name="Cassell G.H."/>
        </authorList>
    </citation>
    <scope>NUCLEOTIDE SEQUENCE [LARGE SCALE GENOMIC DNA]</scope>
    <source>
        <strain>ATCC 700970</strain>
    </source>
</reference>
<reference key="3">
    <citation type="journal article" date="2004" name="Int. J. Syst. Evol. Microbiol.">
        <title>Postgenomic taxonomy of human ureaplasmas - a case study based on multiple gene sequences.</title>
        <authorList>
            <person name="Kong F."/>
            <person name="Gilbert G.L."/>
        </authorList>
    </citation>
    <scope>NUCLEOTIDE SEQUENCE [GENOMIC DNA]</scope>
    <source>
        <strain>ATCC 27813 / 7 / Serovar 1</strain>
        <strain>ATCC 27818 / Pi / Serovar 6</strain>
        <strain>ATCC 33697 / U26 / Serovar 14</strain>
    </source>
</reference>
<gene>
    <name evidence="1" type="primary">ureE</name>
    <name type="ordered locus">UU431</name>
</gene>
<comment type="function">
    <text evidence="1">Involved in urease metallocenter assembly. Binds nickel. Probably functions as a nickel donor during metallocenter assembly.</text>
</comment>
<comment type="subcellular location">
    <subcellularLocation>
        <location>Cytoplasm</location>
    </subcellularLocation>
</comment>
<comment type="similarity">
    <text evidence="1">Belongs to the UreE family.</text>
</comment>
<name>UREE_UREPA</name>
<evidence type="ECO:0000255" key="1">
    <source>
        <dbReference type="HAMAP-Rule" id="MF_00822"/>
    </source>
</evidence>
<evidence type="ECO:0000305" key="2"/>
<organism>
    <name type="scientific">Ureaplasma parvum serovar 3 (strain ATCC 700970)</name>
    <dbReference type="NCBI Taxonomy" id="273119"/>
    <lineage>
        <taxon>Bacteria</taxon>
        <taxon>Bacillati</taxon>
        <taxon>Mycoplasmatota</taxon>
        <taxon>Mycoplasmoidales</taxon>
        <taxon>Mycoplasmoidaceae</taxon>
        <taxon>Ureaplasma</taxon>
    </lineage>
</organism>
<dbReference type="EMBL" id="L40489">
    <property type="protein sequence ID" value="AAA89190.2"/>
    <property type="molecule type" value="Genomic_DNA"/>
</dbReference>
<dbReference type="EMBL" id="AF222894">
    <property type="protein sequence ID" value="AAF30843.1"/>
    <property type="molecule type" value="Genomic_DNA"/>
</dbReference>
<dbReference type="EMBL" id="AF085730">
    <property type="protein sequence ID" value="AAG10353.1"/>
    <property type="molecule type" value="Genomic_DNA"/>
</dbReference>
<dbReference type="EMBL" id="AF085731">
    <property type="protein sequence ID" value="AAG10358.1"/>
    <property type="molecule type" value="Genomic_DNA"/>
</dbReference>
<dbReference type="EMBL" id="AF085733">
    <property type="protein sequence ID" value="AAG10363.1"/>
    <property type="molecule type" value="Genomic_DNA"/>
</dbReference>
<dbReference type="PIR" id="F82890">
    <property type="entry name" value="F82890"/>
</dbReference>
<dbReference type="RefSeq" id="WP_006688775.1">
    <property type="nucleotide sequence ID" value="NC_002162.1"/>
</dbReference>
<dbReference type="SMR" id="Q56559"/>
<dbReference type="STRING" id="273119.UU431"/>
<dbReference type="EnsemblBacteria" id="AAF30843">
    <property type="protein sequence ID" value="AAF30843"/>
    <property type="gene ID" value="UU431"/>
</dbReference>
<dbReference type="GeneID" id="29672354"/>
<dbReference type="KEGG" id="uur:UU431"/>
<dbReference type="eggNOG" id="COG2371">
    <property type="taxonomic scope" value="Bacteria"/>
</dbReference>
<dbReference type="HOGENOM" id="CLU_093757_3_1_14"/>
<dbReference type="OrthoDB" id="9810882at2"/>
<dbReference type="Proteomes" id="UP000000423">
    <property type="component" value="Chromosome"/>
</dbReference>
<dbReference type="GO" id="GO:0005737">
    <property type="term" value="C:cytoplasm"/>
    <property type="evidence" value="ECO:0007669"/>
    <property type="project" value="UniProtKB-SubCell"/>
</dbReference>
<dbReference type="GO" id="GO:0016151">
    <property type="term" value="F:nickel cation binding"/>
    <property type="evidence" value="ECO:0007669"/>
    <property type="project" value="UniProtKB-UniRule"/>
</dbReference>
<dbReference type="GO" id="GO:0051082">
    <property type="term" value="F:unfolded protein binding"/>
    <property type="evidence" value="ECO:0007669"/>
    <property type="project" value="UniProtKB-UniRule"/>
</dbReference>
<dbReference type="GO" id="GO:0006457">
    <property type="term" value="P:protein folding"/>
    <property type="evidence" value="ECO:0007669"/>
    <property type="project" value="InterPro"/>
</dbReference>
<dbReference type="GO" id="GO:0065003">
    <property type="term" value="P:protein-containing complex assembly"/>
    <property type="evidence" value="ECO:0007669"/>
    <property type="project" value="InterPro"/>
</dbReference>
<dbReference type="GO" id="GO:0019627">
    <property type="term" value="P:urea metabolic process"/>
    <property type="evidence" value="ECO:0007669"/>
    <property type="project" value="InterPro"/>
</dbReference>
<dbReference type="CDD" id="cd00571">
    <property type="entry name" value="UreE"/>
    <property type="match status" value="1"/>
</dbReference>
<dbReference type="Gene3D" id="2.60.260.20">
    <property type="entry name" value="Urease metallochaperone UreE, N-terminal domain"/>
    <property type="match status" value="1"/>
</dbReference>
<dbReference type="Gene3D" id="3.30.70.790">
    <property type="entry name" value="UreE, C-terminal domain"/>
    <property type="match status" value="1"/>
</dbReference>
<dbReference type="HAMAP" id="MF_00822">
    <property type="entry name" value="UreE"/>
    <property type="match status" value="1"/>
</dbReference>
<dbReference type="InterPro" id="IPR012406">
    <property type="entry name" value="UreE"/>
</dbReference>
<dbReference type="InterPro" id="IPR007864">
    <property type="entry name" value="UreE_C_dom"/>
</dbReference>
<dbReference type="InterPro" id="IPR004029">
    <property type="entry name" value="UreE_N"/>
</dbReference>
<dbReference type="InterPro" id="IPR036118">
    <property type="entry name" value="UreE_N_sf"/>
</dbReference>
<dbReference type="NCBIfam" id="NF010710">
    <property type="entry name" value="PRK14112.1"/>
    <property type="match status" value="1"/>
</dbReference>
<dbReference type="Pfam" id="PF05194">
    <property type="entry name" value="UreE_C"/>
    <property type="match status" value="1"/>
</dbReference>
<dbReference type="Pfam" id="PF02814">
    <property type="entry name" value="UreE_N"/>
    <property type="match status" value="1"/>
</dbReference>
<dbReference type="PIRSF" id="PIRSF036402">
    <property type="entry name" value="Ureas_acces_UreE"/>
    <property type="match status" value="1"/>
</dbReference>
<dbReference type="SMART" id="SM00988">
    <property type="entry name" value="UreE_N"/>
    <property type="match status" value="1"/>
</dbReference>
<dbReference type="SUPFAM" id="SSF69737">
    <property type="entry name" value="Urease metallochaperone UreE, C-terminal domain"/>
    <property type="match status" value="1"/>
</dbReference>
<dbReference type="SUPFAM" id="SSF69287">
    <property type="entry name" value="Urease metallochaperone UreE, N-terminal domain"/>
    <property type="match status" value="1"/>
</dbReference>
<keyword id="KW-0143">Chaperone</keyword>
<keyword id="KW-0963">Cytoplasm</keyword>
<keyword id="KW-0533">Nickel</keyword>
<keyword id="KW-0996">Nickel insertion</keyword>
<keyword id="KW-1185">Reference proteome</keyword>
<proteinExistence type="inferred from homology"/>
<accession>Q56559</accession>
<accession>Q7BSC4</accession>
<accession>Q7BSC8</accession>
<accession>Q7BSD3</accession>
<accession>Q9PQ57</accession>
<feature type="chain" id="PRO_0000067639" description="Urease accessory protein UreE">
    <location>
        <begin position="1"/>
        <end position="149"/>
    </location>
</feature>
<feature type="sequence conflict" description="In Ref. 1; AAA89190." evidence="2" ref="1">
    <original>DNI</original>
    <variation>APL</variation>
    <location>
        <begin position="9"/>
        <end position="11"/>
    </location>
</feature>
<feature type="sequence conflict" description="In Ref. 1; AAA89190." evidence="2" ref="1">
    <original>MAKIA</original>
    <variation>WQNC</variation>
    <location>
        <begin position="91"/>
        <end position="95"/>
    </location>
</feature>
<protein>
    <recommendedName>
        <fullName evidence="1">Urease accessory protein UreE</fullName>
    </recommendedName>
</protein>
<sequence length="149" mass="17374">MTVFKEILDNIANIKNVESYQIENIHLTSDDVLKRVIIISSDQNVEYGIRLEEDKKLMDGDILYKDDYKLVVIRLELSDVLIITAHTIGEMAKIAHNLGNRHMPAQFTETQMIVPYDYLVEEYLQDNKALYERKKIKLKEAFKHCSDAK</sequence>